<evidence type="ECO:0000250" key="1">
    <source>
        <dbReference type="UniProtKB" id="Q5RL73"/>
    </source>
</evidence>
<evidence type="ECO:0000256" key="2">
    <source>
        <dbReference type="SAM" id="MobiDB-lite"/>
    </source>
</evidence>
<evidence type="ECO:0000305" key="3"/>
<reference key="1">
    <citation type="journal article" date="2004" name="Genome Res.">
        <title>The status, quality, and expansion of the NIH full-length cDNA project: the Mammalian Gene Collection (MGC).</title>
        <authorList>
            <consortium name="The MGC Project Team"/>
        </authorList>
    </citation>
    <scope>NUCLEOTIDE SEQUENCE [LARGE SCALE MRNA]</scope>
    <source>
        <tissue>Thymus</tissue>
    </source>
</reference>
<proteinExistence type="evidence at transcript level"/>
<name>RBM48_RAT</name>
<accession>Q561R3</accession>
<sequence>MASSDGKPGGIFDHHVQTAVCDSRAKYREGRRPRAVKVYTINLESQYLLIQGVPAVGAMKELVERFALYGAIEQYNALDEYPAEDFTEVYLIKFVKLQSARIAKKKMDEQSFFGGLLHVCYAPEFETVEETRKKLEERKAYISRVTKNQDYYVTKKKPVPEQKGTKDSRQDFHAHMPGFCTPALNTSPKNPSENSSPCLPYSCEFPLCYFASKSPCSPGEHTDKASDSCNSARNRGELQKHRDHSAFPPKLQMNTYKTSVPCSSVQEAIATSQAVGRFMPRTTQLQERKRRRDCDRELGTFLETNISSNEVLIGPKLPGIPTVDLQDDSLNTTANLIRSKLKEVTSSVPKPPEDNGEDVCTSHPRKQRRRI</sequence>
<gene>
    <name type="primary">Rbm48</name>
</gene>
<feature type="chain" id="PRO_0000321517" description="RNA-binding protein 48">
    <location>
        <begin position="1"/>
        <end position="371"/>
    </location>
</feature>
<feature type="domain" description="RRM">
    <location>
        <begin position="46"/>
        <end position="124"/>
    </location>
</feature>
<feature type="region of interest" description="Disordered" evidence="2">
    <location>
        <begin position="220"/>
        <end position="249"/>
    </location>
</feature>
<feature type="region of interest" description="Disordered" evidence="2">
    <location>
        <begin position="343"/>
        <end position="371"/>
    </location>
</feature>
<protein>
    <recommendedName>
        <fullName>RNA-binding protein 48</fullName>
    </recommendedName>
</protein>
<keyword id="KW-0507">mRNA processing</keyword>
<keyword id="KW-0508">mRNA splicing</keyword>
<keyword id="KW-1185">Reference proteome</keyword>
<keyword id="KW-0694">RNA-binding</keyword>
<keyword id="KW-0747">Spliceosome</keyword>
<dbReference type="EMBL" id="BC093393">
    <property type="protein sequence ID" value="AAH93393.1"/>
    <property type="molecule type" value="mRNA"/>
</dbReference>
<dbReference type="RefSeq" id="NP_001019417.1">
    <property type="nucleotide sequence ID" value="NM_001024246.1"/>
</dbReference>
<dbReference type="SMR" id="Q561R3"/>
<dbReference type="FunCoup" id="Q561R3">
    <property type="interactions" value="2443"/>
</dbReference>
<dbReference type="STRING" id="10116.ENSRNOP00000012086"/>
<dbReference type="PhosphoSitePlus" id="Q561R3"/>
<dbReference type="PaxDb" id="10116-ENSRNOP00000012086"/>
<dbReference type="GeneID" id="296840"/>
<dbReference type="KEGG" id="rno:296840"/>
<dbReference type="UCSC" id="RGD:1310794">
    <property type="organism name" value="rat"/>
</dbReference>
<dbReference type="AGR" id="RGD:1310794"/>
<dbReference type="CTD" id="84060"/>
<dbReference type="RGD" id="1310794">
    <property type="gene designation" value="Rbm48"/>
</dbReference>
<dbReference type="VEuPathDB" id="HostDB:ENSRNOG00000008980"/>
<dbReference type="eggNOG" id="ENOG502QSNB">
    <property type="taxonomic scope" value="Eukaryota"/>
</dbReference>
<dbReference type="HOGENOM" id="CLU_065720_0_0_1"/>
<dbReference type="InParanoid" id="Q561R3"/>
<dbReference type="OrthoDB" id="47770at9989"/>
<dbReference type="PhylomeDB" id="Q561R3"/>
<dbReference type="TreeFam" id="TF328457"/>
<dbReference type="PRO" id="PR:Q561R3"/>
<dbReference type="Proteomes" id="UP000002494">
    <property type="component" value="Chromosome 4"/>
</dbReference>
<dbReference type="Bgee" id="ENSRNOG00000008980">
    <property type="expression patterns" value="Expressed in thymus and 19 other cell types or tissues"/>
</dbReference>
<dbReference type="GO" id="GO:0005654">
    <property type="term" value="C:nucleoplasm"/>
    <property type="evidence" value="ECO:0000318"/>
    <property type="project" value="GO_Central"/>
</dbReference>
<dbReference type="GO" id="GO:0005681">
    <property type="term" value="C:spliceosomal complex"/>
    <property type="evidence" value="ECO:0007669"/>
    <property type="project" value="UniProtKB-KW"/>
</dbReference>
<dbReference type="GO" id="GO:0003723">
    <property type="term" value="F:RNA binding"/>
    <property type="evidence" value="ECO:0007669"/>
    <property type="project" value="UniProtKB-KW"/>
</dbReference>
<dbReference type="GO" id="GO:0006397">
    <property type="term" value="P:mRNA processing"/>
    <property type="evidence" value="ECO:0007669"/>
    <property type="project" value="UniProtKB-KW"/>
</dbReference>
<dbReference type="GO" id="GO:0008380">
    <property type="term" value="P:RNA splicing"/>
    <property type="evidence" value="ECO:0007669"/>
    <property type="project" value="UniProtKB-KW"/>
</dbReference>
<dbReference type="CDD" id="cd12442">
    <property type="entry name" value="RRM_RBM48"/>
    <property type="match status" value="1"/>
</dbReference>
<dbReference type="FunFam" id="3.30.70.330:FF:000424">
    <property type="entry name" value="RNA-binding protein 48 isoform X4"/>
    <property type="match status" value="1"/>
</dbReference>
<dbReference type="InterPro" id="IPR035979">
    <property type="entry name" value="RBD_domain_sf"/>
</dbReference>
<dbReference type="InterPro" id="IPR039599">
    <property type="entry name" value="RBM48"/>
</dbReference>
<dbReference type="InterPro" id="IPR034264">
    <property type="entry name" value="RBM48_RRM"/>
</dbReference>
<dbReference type="PANTHER" id="PTHR20957">
    <property type="entry name" value="RNA-BINDING PROTEIN 48"/>
    <property type="match status" value="1"/>
</dbReference>
<dbReference type="PANTHER" id="PTHR20957:SF0">
    <property type="entry name" value="RNA-BINDING PROTEIN 48"/>
    <property type="match status" value="1"/>
</dbReference>
<dbReference type="SUPFAM" id="SSF54928">
    <property type="entry name" value="RNA-binding domain, RBD"/>
    <property type="match status" value="1"/>
</dbReference>
<comment type="function">
    <text evidence="1">As a component of the minor spliceosome, involved in the splicing of U12-type introns in pre-mRNAs.</text>
</comment>
<comment type="subunit">
    <text evidence="1">Component of the minor spliceosome. Within this complex, interacts with ARMC7 and PRPF8/PRP8.</text>
</comment>
<comment type="similarity">
    <text evidence="3">Belongs to the RBM48 family.</text>
</comment>
<organism>
    <name type="scientific">Rattus norvegicus</name>
    <name type="common">Rat</name>
    <dbReference type="NCBI Taxonomy" id="10116"/>
    <lineage>
        <taxon>Eukaryota</taxon>
        <taxon>Metazoa</taxon>
        <taxon>Chordata</taxon>
        <taxon>Craniata</taxon>
        <taxon>Vertebrata</taxon>
        <taxon>Euteleostomi</taxon>
        <taxon>Mammalia</taxon>
        <taxon>Eutheria</taxon>
        <taxon>Euarchontoglires</taxon>
        <taxon>Glires</taxon>
        <taxon>Rodentia</taxon>
        <taxon>Myomorpha</taxon>
        <taxon>Muroidea</taxon>
        <taxon>Muridae</taxon>
        <taxon>Murinae</taxon>
        <taxon>Rattus</taxon>
    </lineage>
</organism>